<organism>
    <name type="scientific">Staphylococcus aureus (strain NCTC 8325 / PS 47)</name>
    <dbReference type="NCBI Taxonomy" id="93061"/>
    <lineage>
        <taxon>Bacteria</taxon>
        <taxon>Bacillati</taxon>
        <taxon>Bacillota</taxon>
        <taxon>Bacilli</taxon>
        <taxon>Bacillales</taxon>
        <taxon>Staphylococcaceae</taxon>
        <taxon>Staphylococcus</taxon>
    </lineage>
</organism>
<protein>
    <recommendedName>
        <fullName>Putative antiporter subunit mnhD2</fullName>
    </recommendedName>
    <alternativeName>
        <fullName>Mrp complex subunit D2</fullName>
    </alternativeName>
    <alternativeName>
        <fullName>Putative NADH-ubiquinone oxidoreductase subunit mnhD2</fullName>
    </alternativeName>
</protein>
<reference key="1">
    <citation type="book" date="2006" name="Gram positive pathogens, 2nd edition">
        <title>The Staphylococcus aureus NCTC 8325 genome.</title>
        <editorList>
            <person name="Fischetti V."/>
            <person name="Novick R."/>
            <person name="Ferretti J."/>
            <person name="Portnoy D."/>
            <person name="Rood J."/>
        </editorList>
        <authorList>
            <person name="Gillaspy A.F."/>
            <person name="Worrell V."/>
            <person name="Orvis J."/>
            <person name="Roe B.A."/>
            <person name="Dyer D.W."/>
            <person name="Iandolo J.J."/>
        </authorList>
    </citation>
    <scope>NUCLEOTIDE SEQUENCE [LARGE SCALE GENOMIC DNA]</scope>
    <source>
        <strain>NCTC 8325 / PS 47</strain>
    </source>
</reference>
<proteinExistence type="inferred from homology"/>
<comment type="subunit">
    <text evidence="1">May form a heterooligomeric complex that consists of seven subunits: mnhA2, mnhB2, mnhC2, mnhD2, mnhE2, mnhF2 and mnhG2.</text>
</comment>
<comment type="subcellular location">
    <subcellularLocation>
        <location evidence="3">Cell membrane</location>
        <topology evidence="3">Multi-pass membrane protein</topology>
    </subcellularLocation>
</comment>
<comment type="similarity">
    <text evidence="3">Belongs to the CPA3 antiporters (TC 2.A.63) subunit D family.</text>
</comment>
<feature type="chain" id="PRO_0000372239" description="Putative antiporter subunit mnhD2">
    <location>
        <begin position="1"/>
        <end position="498"/>
    </location>
</feature>
<feature type="transmembrane region" description="Helical" evidence="2">
    <location>
        <begin position="2"/>
        <end position="22"/>
    </location>
</feature>
<feature type="transmembrane region" description="Helical" evidence="2">
    <location>
        <begin position="32"/>
        <end position="52"/>
    </location>
</feature>
<feature type="transmembrane region" description="Helical" evidence="2">
    <location>
        <begin position="78"/>
        <end position="98"/>
    </location>
</feature>
<feature type="transmembrane region" description="Helical" evidence="2">
    <location>
        <begin position="108"/>
        <end position="128"/>
    </location>
</feature>
<feature type="transmembrane region" description="Helical" evidence="2">
    <location>
        <begin position="130"/>
        <end position="150"/>
    </location>
</feature>
<feature type="transmembrane region" description="Helical" evidence="2">
    <location>
        <begin position="161"/>
        <end position="181"/>
    </location>
</feature>
<feature type="transmembrane region" description="Helical" evidence="2">
    <location>
        <begin position="209"/>
        <end position="229"/>
    </location>
</feature>
<feature type="transmembrane region" description="Helical" evidence="2">
    <location>
        <begin position="240"/>
        <end position="260"/>
    </location>
</feature>
<feature type="transmembrane region" description="Helical" evidence="2">
    <location>
        <begin position="271"/>
        <end position="291"/>
    </location>
</feature>
<feature type="transmembrane region" description="Helical" evidence="2">
    <location>
        <begin position="308"/>
        <end position="328"/>
    </location>
</feature>
<feature type="transmembrane region" description="Helical" evidence="2">
    <location>
        <begin position="330"/>
        <end position="350"/>
    </location>
</feature>
<feature type="transmembrane region" description="Helical" evidence="2">
    <location>
        <begin position="369"/>
        <end position="389"/>
    </location>
</feature>
<feature type="transmembrane region" description="Helical" evidence="2">
    <location>
        <begin position="403"/>
        <end position="423"/>
    </location>
</feature>
<feature type="transmembrane region" description="Helical" evidence="2">
    <location>
        <begin position="451"/>
        <end position="471"/>
    </location>
</feature>
<keyword id="KW-0050">Antiport</keyword>
<keyword id="KW-1003">Cell membrane</keyword>
<keyword id="KW-0406">Ion transport</keyword>
<keyword id="KW-0472">Membrane</keyword>
<keyword id="KW-1185">Reference proteome</keyword>
<keyword id="KW-0812">Transmembrane</keyword>
<keyword id="KW-1133">Transmembrane helix</keyword>
<keyword id="KW-0813">Transport</keyword>
<accession>Q2G212</accession>
<evidence type="ECO:0000250" key="1"/>
<evidence type="ECO:0000255" key="2"/>
<evidence type="ECO:0000305" key="3"/>
<dbReference type="EMBL" id="CP000253">
    <property type="protein sequence ID" value="ABD29765.1"/>
    <property type="molecule type" value="Genomic_DNA"/>
</dbReference>
<dbReference type="RefSeq" id="WP_000950548.1">
    <property type="nucleotide sequence ID" value="NZ_LS483365.1"/>
</dbReference>
<dbReference type="RefSeq" id="YP_499190.1">
    <property type="nucleotide sequence ID" value="NC_007795.1"/>
</dbReference>
<dbReference type="SMR" id="Q2G212"/>
<dbReference type="STRING" id="93061.SAOUHSC_00628"/>
<dbReference type="PaxDb" id="1280-SAXN108_0692"/>
<dbReference type="GeneID" id="3920038"/>
<dbReference type="KEGG" id="sao:SAOUHSC_00628"/>
<dbReference type="PATRIC" id="fig|93061.5.peg.564"/>
<dbReference type="eggNOG" id="COG0651">
    <property type="taxonomic scope" value="Bacteria"/>
</dbReference>
<dbReference type="HOGENOM" id="CLU_007100_9_2_9"/>
<dbReference type="OrthoDB" id="9811718at2"/>
<dbReference type="PRO" id="PR:Q2G212"/>
<dbReference type="Proteomes" id="UP000008816">
    <property type="component" value="Chromosome"/>
</dbReference>
<dbReference type="GO" id="GO:0005886">
    <property type="term" value="C:plasma membrane"/>
    <property type="evidence" value="ECO:0007669"/>
    <property type="project" value="UniProtKB-SubCell"/>
</dbReference>
<dbReference type="GO" id="GO:0015297">
    <property type="term" value="F:antiporter activity"/>
    <property type="evidence" value="ECO:0007669"/>
    <property type="project" value="UniProtKB-KW"/>
</dbReference>
<dbReference type="GO" id="GO:0008137">
    <property type="term" value="F:NADH dehydrogenase (ubiquinone) activity"/>
    <property type="evidence" value="ECO:0007669"/>
    <property type="project" value="InterPro"/>
</dbReference>
<dbReference type="GO" id="GO:0042773">
    <property type="term" value="P:ATP synthesis coupled electron transport"/>
    <property type="evidence" value="ECO:0007669"/>
    <property type="project" value="InterPro"/>
</dbReference>
<dbReference type="InterPro" id="IPR050586">
    <property type="entry name" value="CPA3_Na-H_Antiporter_D"/>
</dbReference>
<dbReference type="InterPro" id="IPR003918">
    <property type="entry name" value="NADH_UbQ_OxRdtase"/>
</dbReference>
<dbReference type="InterPro" id="IPR001750">
    <property type="entry name" value="ND/Mrp_TM"/>
</dbReference>
<dbReference type="NCBIfam" id="NF009306">
    <property type="entry name" value="PRK12663.1"/>
    <property type="match status" value="1"/>
</dbReference>
<dbReference type="PANTHER" id="PTHR42703:SF1">
    <property type="entry name" value="NA(+)_H(+) ANTIPORTER SUBUNIT D1"/>
    <property type="match status" value="1"/>
</dbReference>
<dbReference type="PANTHER" id="PTHR42703">
    <property type="entry name" value="NADH DEHYDROGENASE"/>
    <property type="match status" value="1"/>
</dbReference>
<dbReference type="Pfam" id="PF00361">
    <property type="entry name" value="Proton_antipo_M"/>
    <property type="match status" value="1"/>
</dbReference>
<dbReference type="PRINTS" id="PR01437">
    <property type="entry name" value="NUOXDRDTASE4"/>
</dbReference>
<name>MNHD2_STAA8</name>
<gene>
    <name type="primary">mnhD2</name>
    <name type="synonym">mrpD2</name>
    <name type="ordered locus">SAOUHSC_00628</name>
</gene>
<sequence>MLSNLLILPMLLPFLCALILVFLKNNDRISKYLYLGTMTITTIISLMLLIYVQRHRPITLDFGGWSAPFGIQFLGDSLSLIMVTTASFVITLIMAYGFGRGEHKANRYHLPSFILFLSVGVIGSFLTSDLFNLYVMFEIMLLASFVLITLGQSVEQLRAAIIYVVLNIIGSWLFLLGIGLLYKTVGTLNFSHIAMRLNDMGDNRTVTMISLIFLVAFSAKAALVLFMWLPKAYAVLNTELAALFAALMTKVGAYALIRFFTLLFDQHNDLIHPLLATMAAITMVIGAIGVIAYKDIKKIAAYQVIISIGFIILGLGTNTFAGINGAIFYLVNDIVVKTLLFFIIGSLVYITGYRQYQYLNGLAKKEPLFGVAFIIMIFAIGGVPPFSGFPGKVLIFQGALQNGNYIGLALMIITSLIAMYSLFRILFYMYFGDKDGEEVNFKKIPLYRKRILSILVVVVIAIGIAAPVVLNVTSDATELNTSDQLYQKLVNPHLKGED</sequence>